<proteinExistence type="evidence at protein level"/>
<feature type="chain" id="PRO_0000065527" description="Uncharacterized protein ZK632.12">
    <location>
        <begin position="1"/>
        <end position="266"/>
    </location>
</feature>
<feature type="domain" description="PH" evidence="2">
    <location>
        <begin position="35"/>
        <end position="131"/>
    </location>
</feature>
<feature type="zinc finger region" description="FYVE-type" evidence="1">
    <location>
        <begin position="152"/>
        <end position="212"/>
    </location>
</feature>
<feature type="region of interest" description="Disordered" evidence="3">
    <location>
        <begin position="213"/>
        <end position="266"/>
    </location>
</feature>
<feature type="compositionally biased region" description="Basic and acidic residues" evidence="3">
    <location>
        <begin position="221"/>
        <end position="234"/>
    </location>
</feature>
<feature type="compositionally biased region" description="Basic and acidic residues" evidence="3">
    <location>
        <begin position="256"/>
        <end position="266"/>
    </location>
</feature>
<feature type="binding site" evidence="1">
    <location>
        <position position="158"/>
    </location>
    <ligand>
        <name>Zn(2+)</name>
        <dbReference type="ChEBI" id="CHEBI:29105"/>
        <label>1</label>
    </ligand>
</feature>
<feature type="binding site" evidence="1">
    <location>
        <position position="161"/>
    </location>
    <ligand>
        <name>Zn(2+)</name>
        <dbReference type="ChEBI" id="CHEBI:29105"/>
        <label>1</label>
    </ligand>
</feature>
<feature type="binding site" evidence="1">
    <location>
        <position position="175"/>
    </location>
    <ligand>
        <name>Zn(2+)</name>
        <dbReference type="ChEBI" id="CHEBI:29105"/>
        <label>2</label>
    </ligand>
</feature>
<feature type="binding site" evidence="1">
    <location>
        <position position="178"/>
    </location>
    <ligand>
        <name>Zn(2+)</name>
        <dbReference type="ChEBI" id="CHEBI:29105"/>
        <label>2</label>
    </ligand>
</feature>
<feature type="binding site" evidence="1">
    <location>
        <position position="183"/>
    </location>
    <ligand>
        <name>Zn(2+)</name>
        <dbReference type="ChEBI" id="CHEBI:29105"/>
        <label>1</label>
    </ligand>
</feature>
<feature type="binding site" evidence="1">
    <location>
        <position position="186"/>
    </location>
    <ligand>
        <name>Zn(2+)</name>
        <dbReference type="ChEBI" id="CHEBI:29105"/>
        <label>1</label>
    </ligand>
</feature>
<feature type="binding site" evidence="1">
    <location>
        <position position="204"/>
    </location>
    <ligand>
        <name>Zn(2+)</name>
        <dbReference type="ChEBI" id="CHEBI:29105"/>
        <label>2</label>
    </ligand>
</feature>
<feature type="binding site" evidence="1">
    <location>
        <position position="207"/>
    </location>
    <ligand>
        <name>Zn(2+)</name>
        <dbReference type="ChEBI" id="CHEBI:29105"/>
        <label>2</label>
    </ligand>
</feature>
<gene>
    <name type="ORF">ZK632.12</name>
</gene>
<comment type="interaction">
    <interactant intactId="EBI-332273">
        <id>P34657</id>
    </interactant>
    <interactant intactId="EBI-315146">
        <id>O01489</id>
        <label>C13F10.7</label>
    </interactant>
    <organismsDiffer>false</organismsDiffer>
    <experiments>3</experiments>
</comment>
<organism>
    <name type="scientific">Caenorhabditis elegans</name>
    <dbReference type="NCBI Taxonomy" id="6239"/>
    <lineage>
        <taxon>Eukaryota</taxon>
        <taxon>Metazoa</taxon>
        <taxon>Ecdysozoa</taxon>
        <taxon>Nematoda</taxon>
        <taxon>Chromadorea</taxon>
        <taxon>Rhabditida</taxon>
        <taxon>Rhabditina</taxon>
        <taxon>Rhabditomorpha</taxon>
        <taxon>Rhabditoidea</taxon>
        <taxon>Rhabditidae</taxon>
        <taxon>Peloderinae</taxon>
        <taxon>Caenorhabditis</taxon>
    </lineage>
</organism>
<accession>P34657</accession>
<evidence type="ECO:0000255" key="1">
    <source>
        <dbReference type="PROSITE-ProRule" id="PRU00091"/>
    </source>
</evidence>
<evidence type="ECO:0000255" key="2">
    <source>
        <dbReference type="PROSITE-ProRule" id="PRU00145"/>
    </source>
</evidence>
<evidence type="ECO:0000256" key="3">
    <source>
        <dbReference type="SAM" id="MobiDB-lite"/>
    </source>
</evidence>
<reference key="1">
    <citation type="journal article" date="1994" name="Nature">
        <title>2.2 Mb of contiguous nucleotide sequence from chromosome III of C. elegans.</title>
        <authorList>
            <person name="Wilson R."/>
            <person name="Ainscough R."/>
            <person name="Anderson K."/>
            <person name="Baynes C."/>
            <person name="Berks M."/>
            <person name="Bonfield J."/>
            <person name="Burton J."/>
            <person name="Connell M."/>
            <person name="Copsey T."/>
            <person name="Cooper J."/>
            <person name="Coulson A."/>
            <person name="Craxton M."/>
            <person name="Dear S."/>
            <person name="Du Z."/>
            <person name="Durbin R."/>
            <person name="Favello A."/>
            <person name="Fraser A."/>
            <person name="Fulton L."/>
            <person name="Gardner A."/>
            <person name="Green P."/>
            <person name="Hawkins T."/>
            <person name="Hillier L."/>
            <person name="Jier M."/>
            <person name="Johnston L."/>
            <person name="Jones M."/>
            <person name="Kershaw J."/>
            <person name="Kirsten J."/>
            <person name="Laisster N."/>
            <person name="Latreille P."/>
            <person name="Lightning J."/>
            <person name="Lloyd C."/>
            <person name="Mortimore B."/>
            <person name="O'Callaghan M."/>
            <person name="Parsons J."/>
            <person name="Percy C."/>
            <person name="Rifken L."/>
            <person name="Roopra A."/>
            <person name="Saunders D."/>
            <person name="Shownkeen R."/>
            <person name="Sims M."/>
            <person name="Smaldon N."/>
            <person name="Smith A."/>
            <person name="Smith M."/>
            <person name="Sonnhammer E."/>
            <person name="Staden R."/>
            <person name="Sulston J."/>
            <person name="Thierry-Mieg J."/>
            <person name="Thomas K."/>
            <person name="Vaudin M."/>
            <person name="Vaughan K."/>
            <person name="Waterston R."/>
            <person name="Watson A."/>
            <person name="Weinstock L."/>
            <person name="Wilkinson-Sproat J."/>
            <person name="Wohldman P."/>
        </authorList>
    </citation>
    <scope>NUCLEOTIDE SEQUENCE [LARGE SCALE GENOMIC DNA]</scope>
    <source>
        <strain>Bristol N2</strain>
    </source>
</reference>
<reference key="2">
    <citation type="journal article" date="1998" name="Science">
        <title>Genome sequence of the nematode C. elegans: a platform for investigating biology.</title>
        <authorList>
            <consortium name="The C. elegans sequencing consortium"/>
        </authorList>
    </citation>
    <scope>NUCLEOTIDE SEQUENCE [LARGE SCALE GENOMIC DNA]</scope>
    <source>
        <strain>Bristol N2</strain>
    </source>
</reference>
<keyword id="KW-0479">Metal-binding</keyword>
<keyword id="KW-1185">Reference proteome</keyword>
<keyword id="KW-0862">Zinc</keyword>
<keyword id="KW-0863">Zinc-finger</keyword>
<name>YOTB_CAEEL</name>
<protein>
    <recommendedName>
        <fullName>Uncharacterized protein ZK632.12</fullName>
    </recommendedName>
</protein>
<dbReference type="EMBL" id="Z22181">
    <property type="protein sequence ID" value="CAA80187.1"/>
    <property type="molecule type" value="Genomic_DNA"/>
</dbReference>
<dbReference type="PIR" id="D88567">
    <property type="entry name" value="D88567"/>
</dbReference>
<dbReference type="PIR" id="S40944">
    <property type="entry name" value="S40944"/>
</dbReference>
<dbReference type="RefSeq" id="NP_499183.1">
    <property type="nucleotide sequence ID" value="NM_066782.8"/>
</dbReference>
<dbReference type="SMR" id="P34657"/>
<dbReference type="BioGRID" id="41591">
    <property type="interactions" value="15"/>
</dbReference>
<dbReference type="DIP" id="DIP-26764N"/>
<dbReference type="FunCoup" id="P34657">
    <property type="interactions" value="2291"/>
</dbReference>
<dbReference type="IntAct" id="P34657">
    <property type="interactions" value="5"/>
</dbReference>
<dbReference type="STRING" id="6239.ZK632.12.1"/>
<dbReference type="PaxDb" id="6239-ZK632.12"/>
<dbReference type="PeptideAtlas" id="P34657"/>
<dbReference type="EnsemblMetazoa" id="ZK632.12.1">
    <property type="protein sequence ID" value="ZK632.12.1"/>
    <property type="gene ID" value="WBGene00014019"/>
</dbReference>
<dbReference type="GeneID" id="176397"/>
<dbReference type="KEGG" id="cel:CELE_ZK632.12"/>
<dbReference type="UCSC" id="ZK632.12">
    <property type="organism name" value="c. elegans"/>
</dbReference>
<dbReference type="AGR" id="WB:WBGene00014019"/>
<dbReference type="CTD" id="176397"/>
<dbReference type="WormBase" id="ZK632.12">
    <property type="protein sequence ID" value="CE01110"/>
    <property type="gene ID" value="WBGene00014019"/>
</dbReference>
<dbReference type="eggNOG" id="KOG1729">
    <property type="taxonomic scope" value="Eukaryota"/>
</dbReference>
<dbReference type="GeneTree" id="ENSGT00940000156408"/>
<dbReference type="HOGENOM" id="CLU_064864_1_0_1"/>
<dbReference type="InParanoid" id="P34657"/>
<dbReference type="OMA" id="PVRVCEH"/>
<dbReference type="OrthoDB" id="70570at2759"/>
<dbReference type="PhylomeDB" id="P34657"/>
<dbReference type="PRO" id="PR:P34657"/>
<dbReference type="Proteomes" id="UP000001940">
    <property type="component" value="Chromosome III"/>
</dbReference>
<dbReference type="Bgee" id="WBGene00014019">
    <property type="expression patterns" value="Expressed in germ line (C elegans) and 4 other cell types or tissues"/>
</dbReference>
<dbReference type="GO" id="GO:0005769">
    <property type="term" value="C:early endosome"/>
    <property type="evidence" value="ECO:0000318"/>
    <property type="project" value="GO_Central"/>
</dbReference>
<dbReference type="GO" id="GO:0035091">
    <property type="term" value="F:phosphatidylinositol binding"/>
    <property type="evidence" value="ECO:0000318"/>
    <property type="project" value="GO_Central"/>
</dbReference>
<dbReference type="GO" id="GO:0032266">
    <property type="term" value="F:phosphatidylinositol-3-phosphate binding"/>
    <property type="evidence" value="ECO:0000250"/>
    <property type="project" value="WormBase"/>
</dbReference>
<dbReference type="GO" id="GO:0008270">
    <property type="term" value="F:zinc ion binding"/>
    <property type="evidence" value="ECO:0007669"/>
    <property type="project" value="UniProtKB-KW"/>
</dbReference>
<dbReference type="GO" id="GO:0007032">
    <property type="term" value="P:endosome organization"/>
    <property type="evidence" value="ECO:0000318"/>
    <property type="project" value="GO_Central"/>
</dbReference>
<dbReference type="GO" id="GO:0008333">
    <property type="term" value="P:endosome to lysosome transport"/>
    <property type="evidence" value="ECO:0000318"/>
    <property type="project" value="GO_Central"/>
</dbReference>
<dbReference type="CDD" id="cd15717">
    <property type="entry name" value="FYVE_PKHF"/>
    <property type="match status" value="1"/>
</dbReference>
<dbReference type="CDD" id="cd01218">
    <property type="entry name" value="PH_Phafin2-like"/>
    <property type="match status" value="1"/>
</dbReference>
<dbReference type="FunFam" id="2.30.29.30:FF:000167">
    <property type="entry name" value="Pleckstrin homology domain-containing family F member 2"/>
    <property type="match status" value="1"/>
</dbReference>
<dbReference type="Gene3D" id="2.30.29.30">
    <property type="entry name" value="Pleckstrin-homology domain (PH domain)/Phosphotyrosine-binding domain (PTB)"/>
    <property type="match status" value="1"/>
</dbReference>
<dbReference type="Gene3D" id="3.30.40.10">
    <property type="entry name" value="Zinc/RING finger domain, C3HC4 (zinc finger)"/>
    <property type="match status" value="1"/>
</dbReference>
<dbReference type="InterPro" id="IPR011993">
    <property type="entry name" value="PH-like_dom_sf"/>
</dbReference>
<dbReference type="InterPro" id="IPR001849">
    <property type="entry name" value="PH_domain"/>
</dbReference>
<dbReference type="InterPro" id="IPR051765">
    <property type="entry name" value="PH_domain-containing_F"/>
</dbReference>
<dbReference type="InterPro" id="IPR037871">
    <property type="entry name" value="PH_Phafin"/>
</dbReference>
<dbReference type="InterPro" id="IPR000306">
    <property type="entry name" value="Znf_FYVE"/>
</dbReference>
<dbReference type="InterPro" id="IPR017455">
    <property type="entry name" value="Znf_FYVE-rel"/>
</dbReference>
<dbReference type="InterPro" id="IPR011011">
    <property type="entry name" value="Znf_FYVE_PHD"/>
</dbReference>
<dbReference type="InterPro" id="IPR013083">
    <property type="entry name" value="Znf_RING/FYVE/PHD"/>
</dbReference>
<dbReference type="PANTHER" id="PTHR46280:SF3">
    <property type="entry name" value="PLECKSTRIN HOMOLOGY DOMAIN-CONTAINING FAMILY F MEMBER 1 HOMOLOG"/>
    <property type="match status" value="1"/>
</dbReference>
<dbReference type="PANTHER" id="PTHR46280">
    <property type="entry name" value="PLECKSTRIN HOMOLOGY DOMAIN-CONTAINING FAMILY F MEMBER 2-RELATED"/>
    <property type="match status" value="1"/>
</dbReference>
<dbReference type="Pfam" id="PF01363">
    <property type="entry name" value="FYVE"/>
    <property type="match status" value="1"/>
</dbReference>
<dbReference type="Pfam" id="PF00169">
    <property type="entry name" value="PH"/>
    <property type="match status" value="1"/>
</dbReference>
<dbReference type="SMART" id="SM00064">
    <property type="entry name" value="FYVE"/>
    <property type="match status" value="1"/>
</dbReference>
<dbReference type="SMART" id="SM00233">
    <property type="entry name" value="PH"/>
    <property type="match status" value="1"/>
</dbReference>
<dbReference type="SUPFAM" id="SSF57903">
    <property type="entry name" value="FYVE/PHD zinc finger"/>
    <property type="match status" value="1"/>
</dbReference>
<dbReference type="SUPFAM" id="SSF50729">
    <property type="entry name" value="PH domain-like"/>
    <property type="match status" value="1"/>
</dbReference>
<dbReference type="PROSITE" id="PS50003">
    <property type="entry name" value="PH_DOMAIN"/>
    <property type="match status" value="1"/>
</dbReference>
<dbReference type="PROSITE" id="PS50178">
    <property type="entry name" value="ZF_FYVE"/>
    <property type="match status" value="1"/>
</dbReference>
<sequence length="266" mass="30187">MVDRLVNSEVNSRRMANVEQCFGKMGEQLSVFGRVLVGEGVLVKMCRKKPKQRQFFLFNDILVYGNIVISKKRYNKQRILRLEGVQVEDLEDDGIEKHGWIIKTPAKSFAVYAATETEKREWMLHIERCVTDLLERGNKQAATAHAAVWVPDGEAVKCMVCGKTQFNLVQRRHHCRNCGRVVCGACSSRTFRIDNVHKKPVRVCDHCFDSLSSATPGQEESEPKTGNRLHHEDSSSDSEDEVNGSGRSSNESRPTFYREDVQQPAT</sequence>